<dbReference type="EMBL" id="CP001025">
    <property type="protein sequence ID" value="ACB62772.1"/>
    <property type="molecule type" value="Genomic_DNA"/>
</dbReference>
<dbReference type="RefSeq" id="WP_006400662.1">
    <property type="nucleotide sequence ID" value="NC_010551.1"/>
</dbReference>
<dbReference type="SMR" id="B1YRC5"/>
<dbReference type="GeneID" id="98108172"/>
<dbReference type="KEGG" id="bac:BamMC406_0271"/>
<dbReference type="HOGENOM" id="CLU_104295_1_2_4"/>
<dbReference type="OrthoDB" id="9802366at2"/>
<dbReference type="Proteomes" id="UP000001680">
    <property type="component" value="Chromosome 1"/>
</dbReference>
<dbReference type="GO" id="GO:0015935">
    <property type="term" value="C:small ribosomal subunit"/>
    <property type="evidence" value="ECO:0007669"/>
    <property type="project" value="InterPro"/>
</dbReference>
<dbReference type="GO" id="GO:0019843">
    <property type="term" value="F:rRNA binding"/>
    <property type="evidence" value="ECO:0007669"/>
    <property type="project" value="UniProtKB-UniRule"/>
</dbReference>
<dbReference type="GO" id="GO:0003735">
    <property type="term" value="F:structural constituent of ribosome"/>
    <property type="evidence" value="ECO:0007669"/>
    <property type="project" value="InterPro"/>
</dbReference>
<dbReference type="GO" id="GO:0000049">
    <property type="term" value="F:tRNA binding"/>
    <property type="evidence" value="ECO:0007669"/>
    <property type="project" value="UniProtKB-UniRule"/>
</dbReference>
<dbReference type="GO" id="GO:0006412">
    <property type="term" value="P:translation"/>
    <property type="evidence" value="ECO:0007669"/>
    <property type="project" value="UniProtKB-UniRule"/>
</dbReference>
<dbReference type="CDD" id="cd03368">
    <property type="entry name" value="Ribosomal_S12"/>
    <property type="match status" value="1"/>
</dbReference>
<dbReference type="FunFam" id="2.40.50.140:FF:000001">
    <property type="entry name" value="30S ribosomal protein S12"/>
    <property type="match status" value="1"/>
</dbReference>
<dbReference type="Gene3D" id="2.40.50.140">
    <property type="entry name" value="Nucleic acid-binding proteins"/>
    <property type="match status" value="1"/>
</dbReference>
<dbReference type="HAMAP" id="MF_00403_B">
    <property type="entry name" value="Ribosomal_uS12_B"/>
    <property type="match status" value="1"/>
</dbReference>
<dbReference type="InterPro" id="IPR012340">
    <property type="entry name" value="NA-bd_OB-fold"/>
</dbReference>
<dbReference type="InterPro" id="IPR006032">
    <property type="entry name" value="Ribosomal_uS12"/>
</dbReference>
<dbReference type="InterPro" id="IPR005679">
    <property type="entry name" value="Ribosomal_uS12_bac"/>
</dbReference>
<dbReference type="NCBIfam" id="TIGR00981">
    <property type="entry name" value="rpsL_bact"/>
    <property type="match status" value="1"/>
</dbReference>
<dbReference type="PANTHER" id="PTHR11652">
    <property type="entry name" value="30S RIBOSOMAL PROTEIN S12 FAMILY MEMBER"/>
    <property type="match status" value="1"/>
</dbReference>
<dbReference type="Pfam" id="PF00164">
    <property type="entry name" value="Ribosom_S12_S23"/>
    <property type="match status" value="1"/>
</dbReference>
<dbReference type="PIRSF" id="PIRSF002133">
    <property type="entry name" value="Ribosomal_S12/S23"/>
    <property type="match status" value="1"/>
</dbReference>
<dbReference type="PRINTS" id="PR01034">
    <property type="entry name" value="RIBOSOMALS12"/>
</dbReference>
<dbReference type="SUPFAM" id="SSF50249">
    <property type="entry name" value="Nucleic acid-binding proteins"/>
    <property type="match status" value="1"/>
</dbReference>
<dbReference type="PROSITE" id="PS00055">
    <property type="entry name" value="RIBOSOMAL_S12"/>
    <property type="match status" value="1"/>
</dbReference>
<name>RS12_BURA4</name>
<protein>
    <recommendedName>
        <fullName evidence="2">Small ribosomal subunit protein uS12</fullName>
    </recommendedName>
    <alternativeName>
        <fullName evidence="4">30S ribosomal protein S12</fullName>
    </alternativeName>
</protein>
<accession>B1YRC5</accession>
<keyword id="KW-0488">Methylation</keyword>
<keyword id="KW-0687">Ribonucleoprotein</keyword>
<keyword id="KW-0689">Ribosomal protein</keyword>
<keyword id="KW-0694">RNA-binding</keyword>
<keyword id="KW-0699">rRNA-binding</keyword>
<keyword id="KW-0820">tRNA-binding</keyword>
<feature type="chain" id="PRO_1000194135" description="Small ribosomal subunit protein uS12">
    <location>
        <begin position="1"/>
        <end position="126"/>
    </location>
</feature>
<feature type="region of interest" description="Disordered" evidence="3">
    <location>
        <begin position="1"/>
        <end position="28"/>
    </location>
</feature>
<feature type="region of interest" description="Disordered" evidence="3">
    <location>
        <begin position="103"/>
        <end position="126"/>
    </location>
</feature>
<feature type="compositionally biased region" description="Basic residues" evidence="3">
    <location>
        <begin position="113"/>
        <end position="126"/>
    </location>
</feature>
<feature type="modified residue" description="3-methylthioaspartic acid" evidence="1">
    <location>
        <position position="89"/>
    </location>
</feature>
<comment type="function">
    <text evidence="2">With S4 and S5 plays an important role in translational accuracy.</text>
</comment>
<comment type="function">
    <text evidence="2">Interacts with and stabilizes bases of the 16S rRNA that are involved in tRNA selection in the A site and with the mRNA backbone. Located at the interface of the 30S and 50S subunits, it traverses the body of the 30S subunit contacting proteins on the other side and probably holding the rRNA structure together. The combined cluster of proteins S8, S12 and S17 appears to hold together the shoulder and platform of the 30S subunit.</text>
</comment>
<comment type="subunit">
    <text evidence="2">Part of the 30S ribosomal subunit. Contacts proteins S8 and S17. May interact with IF1 in the 30S initiation complex.</text>
</comment>
<comment type="similarity">
    <text evidence="2">Belongs to the universal ribosomal protein uS12 family.</text>
</comment>
<gene>
    <name evidence="2" type="primary">rpsL</name>
    <name type="ordered locus">BamMC406_0271</name>
</gene>
<proteinExistence type="inferred from homology"/>
<sequence length="126" mass="13999">MPTINQLVRKGRQSETTKSKSPALQDCPQRRGVCTRVYTTTPKKPNSALRKVAKVRLTNGFEVISYIGGEGHNLQEHSVVLIRGGRVKDLPGVRYHMVRGSLDTQGVKDRKQARSKYGAKRAKAAK</sequence>
<evidence type="ECO:0000250" key="1"/>
<evidence type="ECO:0000255" key="2">
    <source>
        <dbReference type="HAMAP-Rule" id="MF_00403"/>
    </source>
</evidence>
<evidence type="ECO:0000256" key="3">
    <source>
        <dbReference type="SAM" id="MobiDB-lite"/>
    </source>
</evidence>
<evidence type="ECO:0000305" key="4"/>
<reference key="1">
    <citation type="submission" date="2008-04" db="EMBL/GenBank/DDBJ databases">
        <title>Complete sequence of chromosome 1 of Burkholderia ambifaria MC40-6.</title>
        <authorList>
            <person name="Copeland A."/>
            <person name="Lucas S."/>
            <person name="Lapidus A."/>
            <person name="Glavina del Rio T."/>
            <person name="Dalin E."/>
            <person name="Tice H."/>
            <person name="Pitluck S."/>
            <person name="Chain P."/>
            <person name="Malfatti S."/>
            <person name="Shin M."/>
            <person name="Vergez L."/>
            <person name="Lang D."/>
            <person name="Schmutz J."/>
            <person name="Larimer F."/>
            <person name="Land M."/>
            <person name="Hauser L."/>
            <person name="Kyrpides N."/>
            <person name="Lykidis A."/>
            <person name="Ramette A."/>
            <person name="Konstantinidis K."/>
            <person name="Tiedje J."/>
            <person name="Richardson P."/>
        </authorList>
    </citation>
    <scope>NUCLEOTIDE SEQUENCE [LARGE SCALE GENOMIC DNA]</scope>
    <source>
        <strain>MC40-6</strain>
    </source>
</reference>
<organism>
    <name type="scientific">Burkholderia ambifaria (strain MC40-6)</name>
    <dbReference type="NCBI Taxonomy" id="398577"/>
    <lineage>
        <taxon>Bacteria</taxon>
        <taxon>Pseudomonadati</taxon>
        <taxon>Pseudomonadota</taxon>
        <taxon>Betaproteobacteria</taxon>
        <taxon>Burkholderiales</taxon>
        <taxon>Burkholderiaceae</taxon>
        <taxon>Burkholderia</taxon>
        <taxon>Burkholderia cepacia complex</taxon>
    </lineage>
</organism>